<sequence>MGQKVHPRGFRLGLSADWQAKWFNEKNYKEWLLEDEEIRKFIKNRYYHAGISEIYVERPDAERINITVKTARPGIIIGRKGAEITSLREELERKFNRRVVINIEEIKTPELDAQLVAESIASRIEKRASYKVAMKRAIMNAMRKGAQGIKVMVAGRLGGAEIARREWYLRGRLPLQKLKAIIDYGTATAWTKYGTIGIKVWIYKGDADI</sequence>
<gene>
    <name evidence="1" type="primary">rpsC</name>
    <name type="ordered locus">Tpet_1298</name>
</gene>
<keyword id="KW-0687">Ribonucleoprotein</keyword>
<keyword id="KW-0689">Ribosomal protein</keyword>
<keyword id="KW-0694">RNA-binding</keyword>
<keyword id="KW-0699">rRNA-binding</keyword>
<name>RS3_THEP1</name>
<feature type="chain" id="PRO_1000086169" description="Small ribosomal subunit protein uS3">
    <location>
        <begin position="1"/>
        <end position="209"/>
    </location>
</feature>
<feature type="domain" description="KH type-2" evidence="1">
    <location>
        <begin position="38"/>
        <end position="107"/>
    </location>
</feature>
<protein>
    <recommendedName>
        <fullName evidence="1">Small ribosomal subunit protein uS3</fullName>
    </recommendedName>
    <alternativeName>
        <fullName evidence="2">30S ribosomal protein S3</fullName>
    </alternativeName>
</protein>
<reference key="1">
    <citation type="submission" date="2007-05" db="EMBL/GenBank/DDBJ databases">
        <title>Complete sequence of Thermotoga petrophila RKU-1.</title>
        <authorList>
            <consortium name="US DOE Joint Genome Institute"/>
            <person name="Copeland A."/>
            <person name="Lucas S."/>
            <person name="Lapidus A."/>
            <person name="Barry K."/>
            <person name="Glavina del Rio T."/>
            <person name="Dalin E."/>
            <person name="Tice H."/>
            <person name="Pitluck S."/>
            <person name="Sims D."/>
            <person name="Brettin T."/>
            <person name="Bruce D."/>
            <person name="Detter J.C."/>
            <person name="Han C."/>
            <person name="Tapia R."/>
            <person name="Schmutz J."/>
            <person name="Larimer F."/>
            <person name="Land M."/>
            <person name="Hauser L."/>
            <person name="Kyrpides N."/>
            <person name="Mikhailova N."/>
            <person name="Nelson K."/>
            <person name="Gogarten J.P."/>
            <person name="Noll K."/>
            <person name="Richardson P."/>
        </authorList>
    </citation>
    <scope>NUCLEOTIDE SEQUENCE [LARGE SCALE GENOMIC DNA]</scope>
    <source>
        <strain>ATCC BAA-488 / DSM 13995 / JCM 10881 / RKU-1</strain>
    </source>
</reference>
<evidence type="ECO:0000255" key="1">
    <source>
        <dbReference type="HAMAP-Rule" id="MF_01309"/>
    </source>
</evidence>
<evidence type="ECO:0000305" key="2"/>
<accession>A5IM89</accession>
<proteinExistence type="inferred from homology"/>
<comment type="function">
    <text evidence="1">Binds the lower part of the 30S subunit head. Binds mRNA in the 70S ribosome, positioning it for translation.</text>
</comment>
<comment type="subunit">
    <text evidence="1">Part of the 30S ribosomal subunit. Forms a tight complex with proteins S10 and S14.</text>
</comment>
<comment type="similarity">
    <text evidence="1">Belongs to the universal ribosomal protein uS3 family.</text>
</comment>
<organism>
    <name type="scientific">Thermotoga petrophila (strain ATCC BAA-488 / DSM 13995 / JCM 10881 / RKU-1)</name>
    <dbReference type="NCBI Taxonomy" id="390874"/>
    <lineage>
        <taxon>Bacteria</taxon>
        <taxon>Thermotogati</taxon>
        <taxon>Thermotogota</taxon>
        <taxon>Thermotogae</taxon>
        <taxon>Thermotogales</taxon>
        <taxon>Thermotogaceae</taxon>
        <taxon>Thermotoga</taxon>
    </lineage>
</organism>
<dbReference type="EMBL" id="CP000702">
    <property type="protein sequence ID" value="ABQ47312.1"/>
    <property type="molecule type" value="Genomic_DNA"/>
</dbReference>
<dbReference type="RefSeq" id="WP_011943788.1">
    <property type="nucleotide sequence ID" value="NC_009486.1"/>
</dbReference>
<dbReference type="SMR" id="A5IM89"/>
<dbReference type="STRING" id="390874.Tpet_1298"/>
<dbReference type="KEGG" id="tpt:Tpet_1298"/>
<dbReference type="eggNOG" id="COG0092">
    <property type="taxonomic scope" value="Bacteria"/>
</dbReference>
<dbReference type="HOGENOM" id="CLU_058591_0_2_0"/>
<dbReference type="Proteomes" id="UP000006558">
    <property type="component" value="Chromosome"/>
</dbReference>
<dbReference type="GO" id="GO:0022627">
    <property type="term" value="C:cytosolic small ribosomal subunit"/>
    <property type="evidence" value="ECO:0007669"/>
    <property type="project" value="TreeGrafter"/>
</dbReference>
<dbReference type="GO" id="GO:0003729">
    <property type="term" value="F:mRNA binding"/>
    <property type="evidence" value="ECO:0007669"/>
    <property type="project" value="UniProtKB-UniRule"/>
</dbReference>
<dbReference type="GO" id="GO:0019843">
    <property type="term" value="F:rRNA binding"/>
    <property type="evidence" value="ECO:0007669"/>
    <property type="project" value="UniProtKB-UniRule"/>
</dbReference>
<dbReference type="GO" id="GO:0003735">
    <property type="term" value="F:structural constituent of ribosome"/>
    <property type="evidence" value="ECO:0007669"/>
    <property type="project" value="InterPro"/>
</dbReference>
<dbReference type="GO" id="GO:0006412">
    <property type="term" value="P:translation"/>
    <property type="evidence" value="ECO:0007669"/>
    <property type="project" value="UniProtKB-UniRule"/>
</dbReference>
<dbReference type="CDD" id="cd02412">
    <property type="entry name" value="KH-II_30S_S3"/>
    <property type="match status" value="1"/>
</dbReference>
<dbReference type="FunFam" id="3.30.1140.32:FF:000014">
    <property type="entry name" value="30S ribosomal protein S3"/>
    <property type="match status" value="1"/>
</dbReference>
<dbReference type="FunFam" id="3.30.300.20:FF:000001">
    <property type="entry name" value="30S ribosomal protein S3"/>
    <property type="match status" value="1"/>
</dbReference>
<dbReference type="Gene3D" id="3.30.300.20">
    <property type="match status" value="1"/>
</dbReference>
<dbReference type="Gene3D" id="3.30.1140.32">
    <property type="entry name" value="Ribosomal protein S3, C-terminal domain"/>
    <property type="match status" value="1"/>
</dbReference>
<dbReference type="HAMAP" id="MF_01309_B">
    <property type="entry name" value="Ribosomal_uS3_B"/>
    <property type="match status" value="1"/>
</dbReference>
<dbReference type="InterPro" id="IPR004087">
    <property type="entry name" value="KH_dom"/>
</dbReference>
<dbReference type="InterPro" id="IPR015946">
    <property type="entry name" value="KH_dom-like_a/b"/>
</dbReference>
<dbReference type="InterPro" id="IPR004044">
    <property type="entry name" value="KH_dom_type_2"/>
</dbReference>
<dbReference type="InterPro" id="IPR009019">
    <property type="entry name" value="KH_sf_prok-type"/>
</dbReference>
<dbReference type="InterPro" id="IPR036419">
    <property type="entry name" value="Ribosomal_S3_C_sf"/>
</dbReference>
<dbReference type="InterPro" id="IPR005704">
    <property type="entry name" value="Ribosomal_uS3_bac-typ"/>
</dbReference>
<dbReference type="InterPro" id="IPR001351">
    <property type="entry name" value="Ribosomal_uS3_C"/>
</dbReference>
<dbReference type="InterPro" id="IPR018280">
    <property type="entry name" value="Ribosomal_uS3_CS"/>
</dbReference>
<dbReference type="NCBIfam" id="TIGR01009">
    <property type="entry name" value="rpsC_bact"/>
    <property type="match status" value="1"/>
</dbReference>
<dbReference type="PANTHER" id="PTHR11760">
    <property type="entry name" value="30S/40S RIBOSOMAL PROTEIN S3"/>
    <property type="match status" value="1"/>
</dbReference>
<dbReference type="PANTHER" id="PTHR11760:SF19">
    <property type="entry name" value="SMALL RIBOSOMAL SUBUNIT PROTEIN US3C"/>
    <property type="match status" value="1"/>
</dbReference>
<dbReference type="Pfam" id="PF07650">
    <property type="entry name" value="KH_2"/>
    <property type="match status" value="1"/>
</dbReference>
<dbReference type="Pfam" id="PF00189">
    <property type="entry name" value="Ribosomal_S3_C"/>
    <property type="match status" value="1"/>
</dbReference>
<dbReference type="SMART" id="SM00322">
    <property type="entry name" value="KH"/>
    <property type="match status" value="1"/>
</dbReference>
<dbReference type="SUPFAM" id="SSF54814">
    <property type="entry name" value="Prokaryotic type KH domain (KH-domain type II)"/>
    <property type="match status" value="1"/>
</dbReference>
<dbReference type="SUPFAM" id="SSF54821">
    <property type="entry name" value="Ribosomal protein S3 C-terminal domain"/>
    <property type="match status" value="1"/>
</dbReference>
<dbReference type="PROSITE" id="PS50823">
    <property type="entry name" value="KH_TYPE_2"/>
    <property type="match status" value="1"/>
</dbReference>
<dbReference type="PROSITE" id="PS00548">
    <property type="entry name" value="RIBOSOMAL_S3"/>
    <property type="match status" value="1"/>
</dbReference>